<accession>P86468</accession>
<comment type="function">
    <text evidence="1">Has both toxic and EGF activity.</text>
</comment>
<comment type="subcellular location">
    <subcellularLocation>
        <location evidence="5">Secreted</location>
    </subcellularLocation>
    <subcellularLocation>
        <location evidence="5">Nematocyst</location>
    </subcellularLocation>
</comment>
<comment type="mass spectrometry" mass="5464.88" method="Electrospray" evidence="3"/>
<comment type="similarity">
    <text evidence="5">Belongs to the EGF domain peptide family.</text>
</comment>
<feature type="chain" id="PRO_0000392951" description="Toxin Bcs III 15.09">
    <location>
        <begin position="1"/>
        <end position="45" status="greater than"/>
    </location>
</feature>
<feature type="domain" description="EGF-like" evidence="2">
    <location>
        <begin position="2"/>
        <end position="44"/>
    </location>
</feature>
<feature type="disulfide bond" evidence="2">
    <location>
        <begin position="6"/>
        <end position="21"/>
    </location>
</feature>
<feature type="disulfide bond" evidence="2">
    <location>
        <begin position="15"/>
        <end position="32"/>
    </location>
</feature>
<feature type="disulfide bond" evidence="2">
    <location>
        <begin position="34"/>
        <end position="43"/>
    </location>
</feature>
<feature type="sequence variant" evidence="3">
    <original>N</original>
    <variation>D</variation>
    <location>
        <position position="17"/>
    </location>
</feature>
<feature type="non-terminal residue">
    <location>
        <position position="45"/>
    </location>
</feature>
<organism>
    <name type="scientific">Bunodosoma caissarum</name>
    <name type="common">Sea anemone</name>
    <dbReference type="NCBI Taxonomy" id="31165"/>
    <lineage>
        <taxon>Eukaryota</taxon>
        <taxon>Metazoa</taxon>
        <taxon>Cnidaria</taxon>
        <taxon>Anthozoa</taxon>
        <taxon>Hexacorallia</taxon>
        <taxon>Actiniaria</taxon>
        <taxon>Actiniidae</taxon>
        <taxon>Bunodosoma</taxon>
    </lineage>
</organism>
<dbReference type="SMR" id="P86468"/>
<dbReference type="GO" id="GO:0005576">
    <property type="term" value="C:extracellular region"/>
    <property type="evidence" value="ECO:0007669"/>
    <property type="project" value="UniProtKB-SubCell"/>
</dbReference>
<dbReference type="GO" id="GO:0042151">
    <property type="term" value="C:nematocyst"/>
    <property type="evidence" value="ECO:0007669"/>
    <property type="project" value="UniProtKB-SubCell"/>
</dbReference>
<dbReference type="GO" id="GO:0090729">
    <property type="term" value="F:toxin activity"/>
    <property type="evidence" value="ECO:0007669"/>
    <property type="project" value="UniProtKB-KW"/>
</dbReference>
<dbReference type="CDD" id="cd00054">
    <property type="entry name" value="EGF_CA"/>
    <property type="match status" value="1"/>
</dbReference>
<dbReference type="FunFam" id="2.10.25.10:FF:000118">
    <property type="entry name" value="protein delta homolog 2"/>
    <property type="match status" value="1"/>
</dbReference>
<dbReference type="Gene3D" id="2.10.25.10">
    <property type="entry name" value="Laminin"/>
    <property type="match status" value="1"/>
</dbReference>
<dbReference type="InterPro" id="IPR000742">
    <property type="entry name" value="EGF-like_dom"/>
</dbReference>
<dbReference type="Pfam" id="PF00008">
    <property type="entry name" value="EGF"/>
    <property type="match status" value="1"/>
</dbReference>
<dbReference type="SMART" id="SM00181">
    <property type="entry name" value="EGF"/>
    <property type="match status" value="1"/>
</dbReference>
<dbReference type="SUPFAM" id="SSF57196">
    <property type="entry name" value="EGF/Laminin"/>
    <property type="match status" value="1"/>
</dbReference>
<dbReference type="PROSITE" id="PS00022">
    <property type="entry name" value="EGF_1"/>
    <property type="match status" value="1"/>
</dbReference>
<dbReference type="PROSITE" id="PS01186">
    <property type="entry name" value="EGF_2"/>
    <property type="match status" value="1"/>
</dbReference>
<dbReference type="PROSITE" id="PS50026">
    <property type="entry name" value="EGF_3"/>
    <property type="match status" value="1"/>
</dbReference>
<name>TX150_BUNCI</name>
<protein>
    <recommendedName>
        <fullName evidence="4">Toxin Bcs III 15.09</fullName>
    </recommendedName>
</protein>
<proteinExistence type="evidence at protein level"/>
<reference key="1">
    <citation type="submission" date="2010-02" db="UniProtKB">
        <authorList>
            <person name="Zaharenko A.J."/>
            <person name="Ferreira W.A. Jr."/>
            <person name="Madio B."/>
            <person name="Orts D.J.B."/>
            <person name="Oliveira J.S."/>
            <person name="Konno K."/>
            <person name="Richardson M."/>
            <person name="Freitas J.C."/>
        </authorList>
    </citation>
    <scope>PROTEIN SEQUENCE</scope>
    <scope>MASS SPECTROMETRY</scope>
    <scope>VARIANT ASP-17</scope>
    <source>
        <tissue>Venom</tissue>
    </source>
</reference>
<keyword id="KW-0903">Direct protein sequencing</keyword>
<keyword id="KW-1015">Disulfide bond</keyword>
<keyword id="KW-0245">EGF-like domain</keyword>
<keyword id="KW-0166">Nematocyst</keyword>
<keyword id="KW-0964">Secreted</keyword>
<keyword id="KW-0800">Toxin</keyword>
<evidence type="ECO:0000250" key="1">
    <source>
        <dbReference type="UniProtKB" id="Q76CA1"/>
    </source>
</evidence>
<evidence type="ECO:0000255" key="2">
    <source>
        <dbReference type="PROSITE-ProRule" id="PRU00076"/>
    </source>
</evidence>
<evidence type="ECO:0000269" key="3">
    <source ref="1"/>
</evidence>
<evidence type="ECO:0000303" key="4">
    <source ref="1"/>
</evidence>
<evidence type="ECO:0000305" key="5"/>
<sequence length="45" mass="4961">DQGTACTGEHAHNFCLNGGTCRHIQSLGEYYCICPEGYTGHRCEK</sequence>